<organism>
    <name type="scientific">Treponema pallidum (strain Nichols)</name>
    <dbReference type="NCBI Taxonomy" id="243276"/>
    <lineage>
        <taxon>Bacteria</taxon>
        <taxon>Pseudomonadati</taxon>
        <taxon>Spirochaetota</taxon>
        <taxon>Spirochaetia</taxon>
        <taxon>Spirochaetales</taxon>
        <taxon>Treponemataceae</taxon>
        <taxon>Treponema</taxon>
    </lineage>
</organism>
<dbReference type="EC" id="7.6.2.-" evidence="3"/>
<dbReference type="EMBL" id="AE000520">
    <property type="protein sequence ID" value="AAC65293.1"/>
    <property type="status" value="ALT_FRAME"/>
    <property type="molecule type" value="Genomic_DNA"/>
</dbReference>
<dbReference type="EMBL" id="AE000520">
    <property type="protein sequence ID" value="AAC65288.1"/>
    <property type="status" value="ALT_FRAME"/>
    <property type="molecule type" value="Genomic_DNA"/>
</dbReference>
<dbReference type="PIR" id="E71341">
    <property type="entry name" value="E71341"/>
</dbReference>
<dbReference type="RefSeq" id="WP_010881748.1">
    <property type="nucleotide sequence ID" value="NC_000919.1"/>
</dbReference>
<dbReference type="RefSeq" id="WP_014342787.1">
    <property type="nucleotide sequence ID" value="NC_021490.2"/>
</dbReference>
<dbReference type="SMR" id="O83321"/>
<dbReference type="STRING" id="243276.TP_0300"/>
<dbReference type="EnsemblBacteria" id="AAC65288">
    <property type="protein sequence ID" value="AAC65288"/>
    <property type="gene ID" value="TP_0300"/>
</dbReference>
<dbReference type="EnsemblBacteria" id="AAC65293">
    <property type="protein sequence ID" value="AAC65293"/>
    <property type="gene ID" value="TP_0299"/>
</dbReference>
<dbReference type="KEGG" id="tpa:TP_0299"/>
<dbReference type="KEGG" id="tpa:TP_0300"/>
<dbReference type="KEGG" id="tpw:TPANIC_0300"/>
<dbReference type="PATRIC" id="fig|243276.5.peg.318"/>
<dbReference type="eggNOG" id="COG3845">
    <property type="taxonomic scope" value="Bacteria"/>
</dbReference>
<dbReference type="HOGENOM" id="CLU_2686724_0_0_12"/>
<dbReference type="Proteomes" id="UP000000811">
    <property type="component" value="Chromosome"/>
</dbReference>
<dbReference type="GO" id="GO:0005886">
    <property type="term" value="C:plasma membrane"/>
    <property type="evidence" value="ECO:0007669"/>
    <property type="project" value="UniProtKB-SubCell"/>
</dbReference>
<dbReference type="GO" id="GO:0005524">
    <property type="term" value="F:ATP binding"/>
    <property type="evidence" value="ECO:0007669"/>
    <property type="project" value="UniProtKB-KW"/>
</dbReference>
<dbReference type="GO" id="GO:0016887">
    <property type="term" value="F:ATP hydrolysis activity"/>
    <property type="evidence" value="ECO:0007669"/>
    <property type="project" value="InterPro"/>
</dbReference>
<dbReference type="Gene3D" id="3.40.50.300">
    <property type="entry name" value="P-loop containing nucleotide triphosphate hydrolases"/>
    <property type="match status" value="2"/>
</dbReference>
<dbReference type="InterPro" id="IPR050107">
    <property type="entry name" value="ABC_carbohydrate_import_ATPase"/>
</dbReference>
<dbReference type="InterPro" id="IPR003439">
    <property type="entry name" value="ABC_transporter-like_ATP-bd"/>
</dbReference>
<dbReference type="InterPro" id="IPR017871">
    <property type="entry name" value="ABC_transporter-like_CS"/>
</dbReference>
<dbReference type="InterPro" id="IPR027417">
    <property type="entry name" value="P-loop_NTPase"/>
</dbReference>
<dbReference type="PANTHER" id="PTHR43790">
    <property type="entry name" value="CARBOHYDRATE TRANSPORT ATP-BINDING PROTEIN MG119-RELATED"/>
    <property type="match status" value="1"/>
</dbReference>
<dbReference type="PANTHER" id="PTHR43790:SF8">
    <property type="entry name" value="SUGAR ABC TRANSPORTER ATP-BINDING PROTEIN"/>
    <property type="match status" value="1"/>
</dbReference>
<dbReference type="Pfam" id="PF00005">
    <property type="entry name" value="ABC_tran"/>
    <property type="match status" value="2"/>
</dbReference>
<dbReference type="SUPFAM" id="SSF52540">
    <property type="entry name" value="P-loop containing nucleoside triphosphate hydrolases"/>
    <property type="match status" value="2"/>
</dbReference>
<dbReference type="PROSITE" id="PS00211">
    <property type="entry name" value="ABC_TRANSPORTER_1"/>
    <property type="match status" value="1"/>
</dbReference>
<dbReference type="PROSITE" id="PS50893">
    <property type="entry name" value="ABC_TRANSPORTER_2"/>
    <property type="match status" value="2"/>
</dbReference>
<feature type="chain" id="PRO_0000202229" description="Probable riboflavin import ATP-binding protein RfuB">
    <location>
        <begin position="1"/>
        <end position="586"/>
    </location>
</feature>
<feature type="domain" description="ABC transporter 1" evidence="1">
    <location>
        <begin position="46"/>
        <end position="299"/>
    </location>
</feature>
<feature type="domain" description="ABC transporter 2" evidence="1">
    <location>
        <begin position="343"/>
        <end position="586"/>
    </location>
</feature>
<feature type="binding site" evidence="1">
    <location>
        <begin position="89"/>
        <end position="96"/>
    </location>
    <ligand>
        <name>ATP</name>
        <dbReference type="ChEBI" id="CHEBI:30616"/>
    </ligand>
</feature>
<accession>O83321</accession>
<accession>O83322</accession>
<reference key="1">
    <citation type="journal article" date="1998" name="Science">
        <title>Complete genome sequence of Treponema pallidum, the syphilis spirochete.</title>
        <authorList>
            <person name="Fraser C.M."/>
            <person name="Norris S.J."/>
            <person name="Weinstock G.M."/>
            <person name="White O."/>
            <person name="Sutton G.G."/>
            <person name="Dodson R.J."/>
            <person name="Gwinn M.L."/>
            <person name="Hickey E.K."/>
            <person name="Clayton R.A."/>
            <person name="Ketchum K.A."/>
            <person name="Sodergren E."/>
            <person name="Hardham J.M."/>
            <person name="McLeod M.P."/>
            <person name="Salzberg S.L."/>
            <person name="Peterson J.D."/>
            <person name="Khalak H.G."/>
            <person name="Richardson D.L."/>
            <person name="Howell J.K."/>
            <person name="Chidambaram M."/>
            <person name="Utterback T.R."/>
            <person name="McDonald L.A."/>
            <person name="Artiach P."/>
            <person name="Bowman C."/>
            <person name="Cotton M.D."/>
            <person name="Fujii C."/>
            <person name="Garland S.A."/>
            <person name="Hatch B."/>
            <person name="Horst K."/>
            <person name="Roberts K.M."/>
            <person name="Sandusky M."/>
            <person name="Weidman J.F."/>
            <person name="Smith H.O."/>
            <person name="Venter J.C."/>
        </authorList>
    </citation>
    <scope>NUCLEOTIDE SEQUENCE [LARGE SCALE GENOMIC DNA]</scope>
    <source>
        <strain>Nichols</strain>
    </source>
</reference>
<reference key="2">
    <citation type="journal article" date="2013" name="MBio">
        <title>Evidence for an ABC-type riboflavin transporter system in pathogenic spirochetes.</title>
        <authorList>
            <person name="Deka R.K."/>
            <person name="Brautigam C.A."/>
            <person name="Biddy B.A."/>
            <person name="Liu W.Z."/>
            <person name="Norgard M.V."/>
        </authorList>
    </citation>
    <scope>IDENTIFICATION OF FRAMESHIFT</scope>
    <scope>FUNCTION</scope>
    <scope>SUBUNIT</scope>
    <scope>SUBCELLULAR LOCATION</scope>
</reference>
<keyword id="KW-0067">ATP-binding</keyword>
<keyword id="KW-0997">Cell inner membrane</keyword>
<keyword id="KW-1003">Cell membrane</keyword>
<keyword id="KW-0472">Membrane</keyword>
<keyword id="KW-0547">Nucleotide-binding</keyword>
<keyword id="KW-1185">Reference proteome</keyword>
<keyword id="KW-0677">Repeat</keyword>
<keyword id="KW-1278">Translocase</keyword>
<keyword id="KW-0813">Transport</keyword>
<sequence length="586" mass="64410">MMIAERGVRASARGVLSLHHIGKTYPRVMPRSKRGVWGMFGHPGRRAVDDAHTAHGPCSGARETDAAEHSVLSDVNLSFFTGEIHALLGKNGAGKSTLAHILSGFCVPTHGQLRLDGKEQRFSVPFDALRAGIGIVHQQPVFAERATVFENVVMGSAALTGVRWVRRAQVRERIDRIIAQWRMPLKKEEYVACLSADKRFFVSLLCVLFRNPRFIILDEPRCAPAQSRAVFFSHLEEFFVRSSHAPRCGGGVIVVTHRFADALRWAQRISLIEGGKACSFLRTDLLDEYCSAHQVNECIQKVSCALMSASTVTSSAVSSFSSLSDTQSCATVPRTSSARPWVLRVESLQVSKHADVPLTDISFSVAASAIIGIVGTPEDGVHVLEDILCDMHAGASRTHCTGNILLQEHDQVWCLPLQRNTPSLLRAHGVACVPSNCIQRGASMQLTLFDLLVPYTLRTWRTRVRAQMRFVARLLAEEEIYCDPLQPACTLSGGQLQRVILARELATRPRLLILAEPAEGLDSASEQRLLARLRQVAQAGTALVLLAREQHQAQWRALCTERFLLRAGTLCAEVSGTPSPSQDSHT</sequence>
<comment type="function">
    <text evidence="4">Probably part of the ABC transporter complex RfuABCD involved in riboflavin import. Probably responsible for energy coupling to the transport system.</text>
</comment>
<comment type="subunit">
    <text evidence="4">The complex is probably composed of two ATP-binding proteins (RfuB), two transmembrane proteins (RfuC and RfuD) and a solute-binding protein (RfuA).</text>
</comment>
<comment type="subcellular location">
    <subcellularLocation>
        <location evidence="4">Cell inner membrane</location>
        <topology evidence="4">Peripheral membrane protein</topology>
        <orientation evidence="4">Cytoplasmic side</orientation>
    </subcellularLocation>
</comment>
<comment type="similarity">
    <text evidence="3">Belongs to the ABC transporter superfamily.</text>
</comment>
<comment type="sequence caution" evidence="4">
    <conflict type="frameshift">
        <sequence resource="EMBL-CDS" id="AAC65288"/>
    </conflict>
</comment>
<comment type="sequence caution" evidence="4">
    <conflict type="frameshift">
        <sequence resource="EMBL-CDS" id="AAC65293"/>
    </conflict>
</comment>
<proteinExistence type="evidence at protein level"/>
<protein>
    <recommendedName>
        <fullName evidence="3">Probable riboflavin import ATP-binding protein RfuB</fullName>
        <ecNumber evidence="3">7.6.2.-</ecNumber>
    </recommendedName>
</protein>
<name>RFUB_TREPA</name>
<gene>
    <name evidence="2" type="primary">rfuB</name>
    <name type="ordered locus">TP_0299/TP_0300</name>
</gene>
<evidence type="ECO:0000255" key="1">
    <source>
        <dbReference type="PROSITE-ProRule" id="PRU00434"/>
    </source>
</evidence>
<evidence type="ECO:0000303" key="2">
    <source>
    </source>
</evidence>
<evidence type="ECO:0000305" key="3"/>
<evidence type="ECO:0000305" key="4">
    <source>
    </source>
</evidence>